<organism>
    <name type="scientific">Dictyostelium discoideum</name>
    <name type="common">Social amoeba</name>
    <dbReference type="NCBI Taxonomy" id="44689"/>
    <lineage>
        <taxon>Eukaryota</taxon>
        <taxon>Amoebozoa</taxon>
        <taxon>Evosea</taxon>
        <taxon>Eumycetozoa</taxon>
        <taxon>Dictyostelia</taxon>
        <taxon>Dictyosteliales</taxon>
        <taxon>Dictyosteliaceae</taxon>
        <taxon>Dictyostelium</taxon>
    </lineage>
</organism>
<proteinExistence type="predicted"/>
<sequence length="145" mass="16584">MEQHYHQQNQLRQLKQQQLKELLQQQSKDKEEDEQKHDDYRSPTKTTTTTATSTSAATIQSPIKSNEEDDEIDNSQHNNDTLQISEPEGESEIEEIWEHAFDPLPTSVSKNSAENVTNLGGINARVFSLSKPIYHDPNKLDLLLI</sequence>
<accession>Q54V15</accession>
<feature type="chain" id="PRO_0000352451" description="Putative uncharacterized protein DDB_G0280675">
    <location>
        <begin position="1"/>
        <end position="145"/>
    </location>
</feature>
<feature type="region of interest" description="Disordered" evidence="2">
    <location>
        <begin position="1"/>
        <end position="91"/>
    </location>
</feature>
<feature type="coiled-coil region" evidence="1">
    <location>
        <begin position="1"/>
        <end position="41"/>
    </location>
</feature>
<feature type="compositionally biased region" description="Low complexity" evidence="2">
    <location>
        <begin position="7"/>
        <end position="26"/>
    </location>
</feature>
<feature type="compositionally biased region" description="Basic and acidic residues" evidence="2">
    <location>
        <begin position="27"/>
        <end position="42"/>
    </location>
</feature>
<feature type="compositionally biased region" description="Low complexity" evidence="2">
    <location>
        <begin position="43"/>
        <end position="58"/>
    </location>
</feature>
<keyword id="KW-0175">Coiled coil</keyword>
<keyword id="KW-1185">Reference proteome</keyword>
<name>Y6116_DICDI</name>
<reference key="1">
    <citation type="journal article" date="2005" name="Nature">
        <title>The genome of the social amoeba Dictyostelium discoideum.</title>
        <authorList>
            <person name="Eichinger L."/>
            <person name="Pachebat J.A."/>
            <person name="Gloeckner G."/>
            <person name="Rajandream M.A."/>
            <person name="Sucgang R."/>
            <person name="Berriman M."/>
            <person name="Song J."/>
            <person name="Olsen R."/>
            <person name="Szafranski K."/>
            <person name="Xu Q."/>
            <person name="Tunggal B."/>
            <person name="Kummerfeld S."/>
            <person name="Madera M."/>
            <person name="Konfortov B.A."/>
            <person name="Rivero F."/>
            <person name="Bankier A.T."/>
            <person name="Lehmann R."/>
            <person name="Hamlin N."/>
            <person name="Davies R."/>
            <person name="Gaudet P."/>
            <person name="Fey P."/>
            <person name="Pilcher K."/>
            <person name="Chen G."/>
            <person name="Saunders D."/>
            <person name="Sodergren E.J."/>
            <person name="Davis P."/>
            <person name="Kerhornou A."/>
            <person name="Nie X."/>
            <person name="Hall N."/>
            <person name="Anjard C."/>
            <person name="Hemphill L."/>
            <person name="Bason N."/>
            <person name="Farbrother P."/>
            <person name="Desany B."/>
            <person name="Just E."/>
            <person name="Morio T."/>
            <person name="Rost R."/>
            <person name="Churcher C.M."/>
            <person name="Cooper J."/>
            <person name="Haydock S."/>
            <person name="van Driessche N."/>
            <person name="Cronin A."/>
            <person name="Goodhead I."/>
            <person name="Muzny D.M."/>
            <person name="Mourier T."/>
            <person name="Pain A."/>
            <person name="Lu M."/>
            <person name="Harper D."/>
            <person name="Lindsay R."/>
            <person name="Hauser H."/>
            <person name="James K.D."/>
            <person name="Quiles M."/>
            <person name="Madan Babu M."/>
            <person name="Saito T."/>
            <person name="Buchrieser C."/>
            <person name="Wardroper A."/>
            <person name="Felder M."/>
            <person name="Thangavelu M."/>
            <person name="Johnson D."/>
            <person name="Knights A."/>
            <person name="Loulseged H."/>
            <person name="Mungall K.L."/>
            <person name="Oliver K."/>
            <person name="Price C."/>
            <person name="Quail M.A."/>
            <person name="Urushihara H."/>
            <person name="Hernandez J."/>
            <person name="Rabbinowitsch E."/>
            <person name="Steffen D."/>
            <person name="Sanders M."/>
            <person name="Ma J."/>
            <person name="Kohara Y."/>
            <person name="Sharp S."/>
            <person name="Simmonds M.N."/>
            <person name="Spiegler S."/>
            <person name="Tivey A."/>
            <person name="Sugano S."/>
            <person name="White B."/>
            <person name="Walker D."/>
            <person name="Woodward J.R."/>
            <person name="Winckler T."/>
            <person name="Tanaka Y."/>
            <person name="Shaulsky G."/>
            <person name="Schleicher M."/>
            <person name="Weinstock G.M."/>
            <person name="Rosenthal A."/>
            <person name="Cox E.C."/>
            <person name="Chisholm R.L."/>
            <person name="Gibbs R.A."/>
            <person name="Loomis W.F."/>
            <person name="Platzer M."/>
            <person name="Kay R.R."/>
            <person name="Williams J.G."/>
            <person name="Dear P.H."/>
            <person name="Noegel A.A."/>
            <person name="Barrell B.G."/>
            <person name="Kuspa A."/>
        </authorList>
    </citation>
    <scope>NUCLEOTIDE SEQUENCE [LARGE SCALE GENOMIC DNA]</scope>
    <source>
        <strain>AX4</strain>
    </source>
</reference>
<evidence type="ECO:0000255" key="1"/>
<evidence type="ECO:0000256" key="2">
    <source>
        <dbReference type="SAM" id="MobiDB-lite"/>
    </source>
</evidence>
<gene>
    <name type="ORF">DDB_G0280675</name>
</gene>
<protein>
    <recommendedName>
        <fullName>Putative uncharacterized protein DDB_G0280675</fullName>
    </recommendedName>
</protein>
<dbReference type="EMBL" id="AAFI02000037">
    <property type="protein sequence ID" value="EAL67139.1"/>
    <property type="molecule type" value="Genomic_DNA"/>
</dbReference>
<dbReference type="RefSeq" id="XP_641116.1">
    <property type="nucleotide sequence ID" value="XM_636024.1"/>
</dbReference>
<dbReference type="SMR" id="Q54V15"/>
<dbReference type="PaxDb" id="44689-DDB0206116"/>
<dbReference type="EnsemblProtists" id="EAL67139">
    <property type="protein sequence ID" value="EAL67139"/>
    <property type="gene ID" value="DDB_G0280675"/>
</dbReference>
<dbReference type="GeneID" id="8622675"/>
<dbReference type="KEGG" id="ddi:DDB_G0280675"/>
<dbReference type="dictyBase" id="DDB_G0280675"/>
<dbReference type="VEuPathDB" id="AmoebaDB:DDB_G0280675"/>
<dbReference type="HOGENOM" id="CLU_1790511_0_0_1"/>
<dbReference type="InParanoid" id="Q54V15"/>
<dbReference type="PRO" id="PR:Q54V15"/>
<dbReference type="Proteomes" id="UP000002195">
    <property type="component" value="Chromosome 3"/>
</dbReference>